<organism>
    <name type="scientific">Mesoplasma florum (strain ATCC 33453 / NBRC 100688 / NCTC 11704 / L1)</name>
    <name type="common">Acholeplasma florum</name>
    <dbReference type="NCBI Taxonomy" id="265311"/>
    <lineage>
        <taxon>Bacteria</taxon>
        <taxon>Bacillati</taxon>
        <taxon>Mycoplasmatota</taxon>
        <taxon>Mollicutes</taxon>
        <taxon>Entomoplasmatales</taxon>
        <taxon>Entomoplasmataceae</taxon>
        <taxon>Mesoplasma</taxon>
    </lineage>
</organism>
<comment type="catalytic activity">
    <reaction evidence="1">
        <text>tRNA(Phe) + L-phenylalanine + ATP = L-phenylalanyl-tRNA(Phe) + AMP + diphosphate + H(+)</text>
        <dbReference type="Rhea" id="RHEA:19413"/>
        <dbReference type="Rhea" id="RHEA-COMP:9668"/>
        <dbReference type="Rhea" id="RHEA-COMP:9699"/>
        <dbReference type="ChEBI" id="CHEBI:15378"/>
        <dbReference type="ChEBI" id="CHEBI:30616"/>
        <dbReference type="ChEBI" id="CHEBI:33019"/>
        <dbReference type="ChEBI" id="CHEBI:58095"/>
        <dbReference type="ChEBI" id="CHEBI:78442"/>
        <dbReference type="ChEBI" id="CHEBI:78531"/>
        <dbReference type="ChEBI" id="CHEBI:456215"/>
        <dbReference type="EC" id="6.1.1.20"/>
    </reaction>
</comment>
<comment type="cofactor">
    <cofactor evidence="1">
        <name>Mg(2+)</name>
        <dbReference type="ChEBI" id="CHEBI:18420"/>
    </cofactor>
    <text evidence="1">Binds 2 magnesium ions per tetramer.</text>
</comment>
<comment type="subunit">
    <text evidence="1">Tetramer of two alpha and two beta subunits.</text>
</comment>
<comment type="subcellular location">
    <subcellularLocation>
        <location evidence="1">Cytoplasm</location>
    </subcellularLocation>
</comment>
<comment type="similarity">
    <text evidence="1">Belongs to the class-II aminoacyl-tRNA synthetase family. Phe-tRNA synthetase alpha subunit type 1 subfamily.</text>
</comment>
<keyword id="KW-0030">Aminoacyl-tRNA synthetase</keyword>
<keyword id="KW-0067">ATP-binding</keyword>
<keyword id="KW-0963">Cytoplasm</keyword>
<keyword id="KW-0436">Ligase</keyword>
<keyword id="KW-0460">Magnesium</keyword>
<keyword id="KW-0479">Metal-binding</keyword>
<keyword id="KW-0547">Nucleotide-binding</keyword>
<keyword id="KW-0648">Protein biosynthesis</keyword>
<keyword id="KW-1185">Reference proteome</keyword>
<protein>
    <recommendedName>
        <fullName evidence="1">Phenylalanine--tRNA ligase alpha subunit</fullName>
        <ecNumber evidence="1">6.1.1.20</ecNumber>
    </recommendedName>
    <alternativeName>
        <fullName evidence="1">Phenylalanyl-tRNA synthetase alpha subunit</fullName>
        <shortName evidence="1">PheRS</shortName>
    </alternativeName>
</protein>
<evidence type="ECO:0000255" key="1">
    <source>
        <dbReference type="HAMAP-Rule" id="MF_00281"/>
    </source>
</evidence>
<accession>Q6F165</accession>
<reference key="1">
    <citation type="submission" date="2004-06" db="EMBL/GenBank/DDBJ databases">
        <authorList>
            <person name="Birren B.W."/>
            <person name="Stange-Thomann N."/>
            <person name="Hafez N."/>
            <person name="DeCaprio D."/>
            <person name="Fisher S."/>
            <person name="Butler J."/>
            <person name="Elkins T."/>
            <person name="Kodira C.D."/>
            <person name="Major J."/>
            <person name="Wang S."/>
            <person name="Nicol R."/>
            <person name="Nusbaum C."/>
        </authorList>
    </citation>
    <scope>NUCLEOTIDE SEQUENCE [LARGE SCALE GENOMIC DNA]</scope>
    <source>
        <strain>ATCC 33453 / NBRC 100688 / NCTC 11704 / L1</strain>
    </source>
</reference>
<gene>
    <name evidence="1" type="primary">pheS</name>
    <name type="ordered locus">Mfl399</name>
</gene>
<proteinExistence type="inferred from homology"/>
<dbReference type="EC" id="6.1.1.20" evidence="1"/>
<dbReference type="EMBL" id="AE017263">
    <property type="protein sequence ID" value="AAT75758.1"/>
    <property type="molecule type" value="Genomic_DNA"/>
</dbReference>
<dbReference type="RefSeq" id="WP_011183298.1">
    <property type="nucleotide sequence ID" value="NC_006055.1"/>
</dbReference>
<dbReference type="RefSeq" id="YP_053642.1">
    <property type="nucleotide sequence ID" value="NC_006055.1"/>
</dbReference>
<dbReference type="SMR" id="Q6F165"/>
<dbReference type="STRING" id="265311.Mfl399"/>
<dbReference type="PaxDb" id="265311-Mfl399"/>
<dbReference type="EnsemblBacteria" id="AAT75758">
    <property type="protein sequence ID" value="AAT75758"/>
    <property type="gene ID" value="Mfl399"/>
</dbReference>
<dbReference type="GeneID" id="2897661"/>
<dbReference type="KEGG" id="mfl:Mfl399"/>
<dbReference type="PATRIC" id="fig|265311.5.peg.399"/>
<dbReference type="eggNOG" id="COG0016">
    <property type="taxonomic scope" value="Bacteria"/>
</dbReference>
<dbReference type="HOGENOM" id="CLU_025086_0_1_14"/>
<dbReference type="OrthoDB" id="9800719at2"/>
<dbReference type="Proteomes" id="UP000006647">
    <property type="component" value="Chromosome"/>
</dbReference>
<dbReference type="GO" id="GO:0005737">
    <property type="term" value="C:cytoplasm"/>
    <property type="evidence" value="ECO:0007669"/>
    <property type="project" value="UniProtKB-SubCell"/>
</dbReference>
<dbReference type="GO" id="GO:0005524">
    <property type="term" value="F:ATP binding"/>
    <property type="evidence" value="ECO:0007669"/>
    <property type="project" value="UniProtKB-UniRule"/>
</dbReference>
<dbReference type="GO" id="GO:0000287">
    <property type="term" value="F:magnesium ion binding"/>
    <property type="evidence" value="ECO:0007669"/>
    <property type="project" value="UniProtKB-UniRule"/>
</dbReference>
<dbReference type="GO" id="GO:0004826">
    <property type="term" value="F:phenylalanine-tRNA ligase activity"/>
    <property type="evidence" value="ECO:0007669"/>
    <property type="project" value="UniProtKB-UniRule"/>
</dbReference>
<dbReference type="GO" id="GO:0000049">
    <property type="term" value="F:tRNA binding"/>
    <property type="evidence" value="ECO:0007669"/>
    <property type="project" value="InterPro"/>
</dbReference>
<dbReference type="GO" id="GO:0006432">
    <property type="term" value="P:phenylalanyl-tRNA aminoacylation"/>
    <property type="evidence" value="ECO:0007669"/>
    <property type="project" value="UniProtKB-UniRule"/>
</dbReference>
<dbReference type="CDD" id="cd00496">
    <property type="entry name" value="PheRS_alpha_core"/>
    <property type="match status" value="1"/>
</dbReference>
<dbReference type="Gene3D" id="3.30.930.10">
    <property type="entry name" value="Bira Bifunctional Protein, Domain 2"/>
    <property type="match status" value="1"/>
</dbReference>
<dbReference type="HAMAP" id="MF_00281">
    <property type="entry name" value="Phe_tRNA_synth_alpha1"/>
    <property type="match status" value="1"/>
</dbReference>
<dbReference type="InterPro" id="IPR045864">
    <property type="entry name" value="aa-tRNA-synth_II/BPL/LPL"/>
</dbReference>
<dbReference type="InterPro" id="IPR004529">
    <property type="entry name" value="Phe-tRNA-synth_IIc_asu"/>
</dbReference>
<dbReference type="InterPro" id="IPR004188">
    <property type="entry name" value="Phe-tRNA_ligase_II_N"/>
</dbReference>
<dbReference type="InterPro" id="IPR022911">
    <property type="entry name" value="Phe_tRNA_ligase_alpha1_bac"/>
</dbReference>
<dbReference type="InterPro" id="IPR002319">
    <property type="entry name" value="Phenylalanyl-tRNA_Synthase"/>
</dbReference>
<dbReference type="InterPro" id="IPR010978">
    <property type="entry name" value="tRNA-bd_arm"/>
</dbReference>
<dbReference type="NCBIfam" id="TIGR00468">
    <property type="entry name" value="pheS"/>
    <property type="match status" value="1"/>
</dbReference>
<dbReference type="PANTHER" id="PTHR11538:SF41">
    <property type="entry name" value="PHENYLALANINE--TRNA LIGASE, MITOCHONDRIAL"/>
    <property type="match status" value="1"/>
</dbReference>
<dbReference type="PANTHER" id="PTHR11538">
    <property type="entry name" value="PHENYLALANYL-TRNA SYNTHETASE"/>
    <property type="match status" value="1"/>
</dbReference>
<dbReference type="Pfam" id="PF02912">
    <property type="entry name" value="Phe_tRNA-synt_N"/>
    <property type="match status" value="1"/>
</dbReference>
<dbReference type="Pfam" id="PF01409">
    <property type="entry name" value="tRNA-synt_2d"/>
    <property type="match status" value="1"/>
</dbReference>
<dbReference type="SUPFAM" id="SSF55681">
    <property type="entry name" value="Class II aaRS and biotin synthetases"/>
    <property type="match status" value="1"/>
</dbReference>
<dbReference type="SUPFAM" id="SSF46589">
    <property type="entry name" value="tRNA-binding arm"/>
    <property type="match status" value="1"/>
</dbReference>
<sequence length="350" mass="39601">MLKKINKIKDQFISDLNKVKTIEEAEKLKKSLLGKESELSEILKSLKDSDTNDKQAIGIASHELRTFIASTIDEFVARIKKEALDAKLASEKIDVSLTGTLARFGTKHPLNIVVEEITQIFTEIGFDVLNGNDVESDEYCFQKLNLPVGHPARDMQDTFYIDEETVLSTHCTHMTARVLTQMAKDENFEGNYACVAIGNVYRRDDDDATHSHQFMQLDLLCIGKKITFANLKWVLKYMCKRLFGEEVNIRLRPSLFPFTEPSVEVDVSCFKCSGKGCSICKYSGWIEILGSGIINEQVMLLNGMDPEKNTALAFGAGIERIAMLKFGISNIRNLYENNVQFLEQFKFYGE</sequence>
<name>SYFA_MESFL</name>
<feature type="chain" id="PRO_0000231992" description="Phenylalanine--tRNA ligase alpha subunit">
    <location>
        <begin position="1"/>
        <end position="350"/>
    </location>
</feature>
<feature type="binding site" evidence="1">
    <location>
        <position position="260"/>
    </location>
    <ligand>
        <name>Mg(2+)</name>
        <dbReference type="ChEBI" id="CHEBI:18420"/>
        <note>shared with beta subunit</note>
    </ligand>
</feature>